<name>FLAA_LISMO</name>
<gene>
    <name type="primary">flaA</name>
    <name type="ordered locus">lmo0690</name>
</gene>
<protein>
    <recommendedName>
        <fullName>Flagellin</fullName>
    </recommendedName>
</protein>
<proteinExistence type="inferred from homology"/>
<sequence length="287" mass="30444">MKVNTNIISLKTQEYLRKNNEGMTQAQERLASGKRINSSLDDAAGLAVVTRMNVKSTGLDAASKNSSMGIDLLQTADSALSSMSSILQRMRQLAVQSSNGSFSDEDRKQYTAEFGSLIKELDHVADTTNYNNIKLLDQTATGAATQVSIQASDKANDLINIDLFNAKGLSAGTITLGSGSTVAGYSALSVADADSSQQATEAIDELINNISNGRALLGAGMSRLSYNVSNVNNQSIATKASASSIEDADMAAEMSEMTKYKILTQTSISMLSQANQTPQMLTQLINS</sequence>
<reference key="1">
    <citation type="journal article" date="1992" name="Mol. Microbiol.">
        <title>Cloning and characterization of a gene encoding flagellin of Listeria monocytogenes.</title>
        <authorList>
            <person name="Dons L."/>
            <person name="Rasmussen O.F."/>
            <person name="Olsen J.E."/>
        </authorList>
    </citation>
    <scope>NUCLEOTIDE SEQUENCE [GENOMIC DNA]</scope>
    <source>
        <strain>12067</strain>
    </source>
</reference>
<reference key="2">
    <citation type="journal article" date="2001" name="Science">
        <title>Comparative genomics of Listeria species.</title>
        <authorList>
            <person name="Glaser P."/>
            <person name="Frangeul L."/>
            <person name="Buchrieser C."/>
            <person name="Rusniok C."/>
            <person name="Amend A."/>
            <person name="Baquero F."/>
            <person name="Berche P."/>
            <person name="Bloecker H."/>
            <person name="Brandt P."/>
            <person name="Chakraborty T."/>
            <person name="Charbit A."/>
            <person name="Chetouani F."/>
            <person name="Couve E."/>
            <person name="de Daruvar A."/>
            <person name="Dehoux P."/>
            <person name="Domann E."/>
            <person name="Dominguez-Bernal G."/>
            <person name="Duchaud E."/>
            <person name="Durant L."/>
            <person name="Dussurget O."/>
            <person name="Entian K.-D."/>
            <person name="Fsihi H."/>
            <person name="Garcia-del Portillo F."/>
            <person name="Garrido P."/>
            <person name="Gautier L."/>
            <person name="Goebel W."/>
            <person name="Gomez-Lopez N."/>
            <person name="Hain T."/>
            <person name="Hauf J."/>
            <person name="Jackson D."/>
            <person name="Jones L.-M."/>
            <person name="Kaerst U."/>
            <person name="Kreft J."/>
            <person name="Kuhn M."/>
            <person name="Kunst F."/>
            <person name="Kurapkat G."/>
            <person name="Madueno E."/>
            <person name="Maitournam A."/>
            <person name="Mata Vicente J."/>
            <person name="Ng E."/>
            <person name="Nedjari H."/>
            <person name="Nordsiek G."/>
            <person name="Novella S."/>
            <person name="de Pablos B."/>
            <person name="Perez-Diaz J.-C."/>
            <person name="Purcell R."/>
            <person name="Remmel B."/>
            <person name="Rose M."/>
            <person name="Schlueter T."/>
            <person name="Simoes N."/>
            <person name="Tierrez A."/>
            <person name="Vazquez-Boland J.-A."/>
            <person name="Voss H."/>
            <person name="Wehland J."/>
            <person name="Cossart P."/>
        </authorList>
    </citation>
    <scope>NUCLEOTIDE SEQUENCE [LARGE SCALE GENOMIC DNA]</scope>
    <source>
        <strain>ATCC BAA-679 / EGD-e</strain>
    </source>
</reference>
<organism>
    <name type="scientific">Listeria monocytogenes serovar 1/2a (strain ATCC BAA-679 / EGD-e)</name>
    <dbReference type="NCBI Taxonomy" id="169963"/>
    <lineage>
        <taxon>Bacteria</taxon>
        <taxon>Bacillati</taxon>
        <taxon>Bacillota</taxon>
        <taxon>Bacilli</taxon>
        <taxon>Bacillales</taxon>
        <taxon>Listeriaceae</taxon>
        <taxon>Listeria</taxon>
    </lineage>
</organism>
<feature type="chain" id="PRO_0000182618" description="Flagellin">
    <location>
        <begin position="1"/>
        <end position="287"/>
    </location>
</feature>
<feature type="sequence conflict" description="In Ref. 1; CAA46578." evidence="1" ref="1">
    <original>Q</original>
    <variation>E</variation>
    <location>
        <position position="198"/>
    </location>
</feature>
<keyword id="KW-0975">Bacterial flagellum</keyword>
<keyword id="KW-1185">Reference proteome</keyword>
<keyword id="KW-0964">Secreted</keyword>
<accession>Q02551</accession>
<comment type="function">
    <text>Flagellin is the subunit protein which polymerizes to form the filaments of bacterial flagella.</text>
</comment>
<comment type="subcellular location">
    <subcellularLocation>
        <location>Secreted</location>
    </subcellularLocation>
    <subcellularLocation>
        <location>Bacterial flagellum</location>
    </subcellularLocation>
</comment>
<comment type="similarity">
    <text evidence="1">Belongs to the bacterial flagellin family.</text>
</comment>
<dbReference type="EMBL" id="X65624">
    <property type="protein sequence ID" value="CAA46578.1"/>
    <property type="molecule type" value="Genomic_DNA"/>
</dbReference>
<dbReference type="EMBL" id="AL591976">
    <property type="protein sequence ID" value="CAC98768.1"/>
    <property type="molecule type" value="Genomic_DNA"/>
</dbReference>
<dbReference type="PIR" id="AB1161">
    <property type="entry name" value="AB1161"/>
</dbReference>
<dbReference type="PIR" id="S28040">
    <property type="entry name" value="S28040"/>
</dbReference>
<dbReference type="RefSeq" id="NP_464217.1">
    <property type="nucleotide sequence ID" value="NC_003210.1"/>
</dbReference>
<dbReference type="RefSeq" id="WP_003721811.1">
    <property type="nucleotide sequence ID" value="NZ_CP149495.1"/>
</dbReference>
<dbReference type="SMR" id="Q02551"/>
<dbReference type="STRING" id="169963.gene:17593341"/>
<dbReference type="PaxDb" id="169963-lmo0690"/>
<dbReference type="EnsemblBacteria" id="CAC98768">
    <property type="protein sequence ID" value="CAC98768"/>
    <property type="gene ID" value="CAC98768"/>
</dbReference>
<dbReference type="GeneID" id="987167"/>
<dbReference type="KEGG" id="lmo:lmo0690"/>
<dbReference type="PATRIC" id="fig|169963.11.peg.711"/>
<dbReference type="eggNOG" id="COG1344">
    <property type="taxonomic scope" value="Bacteria"/>
</dbReference>
<dbReference type="HOGENOM" id="CLU_011142_2_3_9"/>
<dbReference type="OrthoDB" id="9796789at2"/>
<dbReference type="PhylomeDB" id="Q02551"/>
<dbReference type="BioCyc" id="LMON169963:LMO0690-MONOMER"/>
<dbReference type="Proteomes" id="UP000000817">
    <property type="component" value="Chromosome"/>
</dbReference>
<dbReference type="GO" id="GO:0009288">
    <property type="term" value="C:bacterial-type flagellum"/>
    <property type="evidence" value="ECO:0007669"/>
    <property type="project" value="UniProtKB-SubCell"/>
</dbReference>
<dbReference type="GO" id="GO:0005576">
    <property type="term" value="C:extracellular region"/>
    <property type="evidence" value="ECO:0007669"/>
    <property type="project" value="UniProtKB-SubCell"/>
</dbReference>
<dbReference type="GO" id="GO:0005198">
    <property type="term" value="F:structural molecule activity"/>
    <property type="evidence" value="ECO:0007669"/>
    <property type="project" value="InterPro"/>
</dbReference>
<dbReference type="Gene3D" id="1.20.1330.10">
    <property type="entry name" value="f41 fragment of flagellin, N-terminal domain"/>
    <property type="match status" value="1"/>
</dbReference>
<dbReference type="Gene3D" id="6.10.10.10">
    <property type="entry name" value="Flagellar export chaperone, C-terminal domain"/>
    <property type="match status" value="1"/>
</dbReference>
<dbReference type="InterPro" id="IPR001492">
    <property type="entry name" value="Flagellin"/>
</dbReference>
<dbReference type="InterPro" id="IPR046358">
    <property type="entry name" value="Flagellin_C"/>
</dbReference>
<dbReference type="InterPro" id="IPR042187">
    <property type="entry name" value="Flagellin_C_sub2"/>
</dbReference>
<dbReference type="InterPro" id="IPR001029">
    <property type="entry name" value="Flagellin_N"/>
</dbReference>
<dbReference type="NCBIfam" id="NF009447">
    <property type="entry name" value="PRK12805.1"/>
    <property type="match status" value="1"/>
</dbReference>
<dbReference type="PANTHER" id="PTHR42792">
    <property type="entry name" value="FLAGELLIN"/>
    <property type="match status" value="1"/>
</dbReference>
<dbReference type="PANTHER" id="PTHR42792:SF2">
    <property type="entry name" value="FLAGELLIN"/>
    <property type="match status" value="1"/>
</dbReference>
<dbReference type="Pfam" id="PF00700">
    <property type="entry name" value="Flagellin_C"/>
    <property type="match status" value="1"/>
</dbReference>
<dbReference type="Pfam" id="PF00669">
    <property type="entry name" value="Flagellin_N"/>
    <property type="match status" value="1"/>
</dbReference>
<dbReference type="PRINTS" id="PR00207">
    <property type="entry name" value="FLAGELLIN"/>
</dbReference>
<dbReference type="SUPFAM" id="SSF64518">
    <property type="entry name" value="Phase 1 flagellin"/>
    <property type="match status" value="1"/>
</dbReference>
<evidence type="ECO:0000305" key="1"/>